<organism>
    <name type="scientific">Acanthamoeba polyphaga mimivirus</name>
    <name type="common">APMV</name>
    <dbReference type="NCBI Taxonomy" id="212035"/>
    <lineage>
        <taxon>Viruses</taxon>
        <taxon>Varidnaviria</taxon>
        <taxon>Bamfordvirae</taxon>
        <taxon>Nucleocytoviricota</taxon>
        <taxon>Megaviricetes</taxon>
        <taxon>Imitervirales</taxon>
        <taxon>Mimiviridae</taxon>
        <taxon>Megamimivirinae</taxon>
        <taxon>Mimivirus</taxon>
        <taxon>Mimivirus bradfordmassiliense</taxon>
    </lineage>
</organism>
<proteinExistence type="predicted"/>
<feature type="chain" id="PRO_0000253295" description="Uncharacterized protein L805">
    <location>
        <begin position="1"/>
        <end position="192"/>
    </location>
</feature>
<accession>Q5UR57</accession>
<keyword id="KW-1185">Reference proteome</keyword>
<organismHost>
    <name type="scientific">Acanthamoeba polyphaga</name>
    <name type="common">Amoeba</name>
    <dbReference type="NCBI Taxonomy" id="5757"/>
</organismHost>
<protein>
    <recommendedName>
        <fullName>Uncharacterized protein L805</fullName>
    </recommendedName>
</protein>
<name>YL805_MIMIV</name>
<sequence length="192" mass="22148">MRLNIIDLREIGALTIECEDYLSKLIAVACSLDDLKYNFSLYAKADFEWCNERLINYVIAGYIGQNSSRVKFLNLEFISSGEWLNAIFTSGNKLDVDHILITMTYINKNMPFQNIIEEAEYISGKNTWLDAPTPLKTILDLLDDACLYKYPVKIIVPTVITTDPLAIELLEKYNSLDIEYIRLKSRIEWNSE</sequence>
<gene>
    <name type="ordered locus">MIMI_L805</name>
</gene>
<dbReference type="EMBL" id="AY653733">
    <property type="protein sequence ID" value="AAV51065.1"/>
    <property type="molecule type" value="Genomic_DNA"/>
</dbReference>
<dbReference type="KEGG" id="vg:9925467"/>
<dbReference type="OrthoDB" id="31437at10239"/>
<dbReference type="Proteomes" id="UP000001134">
    <property type="component" value="Genome"/>
</dbReference>
<reference key="1">
    <citation type="journal article" date="2004" name="Science">
        <title>The 1.2-megabase genome sequence of Mimivirus.</title>
        <authorList>
            <person name="Raoult D."/>
            <person name="Audic S."/>
            <person name="Robert C."/>
            <person name="Abergel C."/>
            <person name="Renesto P."/>
            <person name="Ogata H."/>
            <person name="La Scola B."/>
            <person name="Susan M."/>
            <person name="Claverie J.-M."/>
        </authorList>
    </citation>
    <scope>NUCLEOTIDE SEQUENCE [LARGE SCALE GENOMIC DNA]</scope>
    <source>
        <strain>Rowbotham-Bradford</strain>
    </source>
</reference>